<reference key="1">
    <citation type="submission" date="1999-12" db="EMBL/GenBank/DDBJ databases">
        <title>A novel gene expressed in human liver cancer tissue.</title>
        <authorList>
            <person name="Li Y."/>
            <person name="Wu T."/>
            <person name="Xu S."/>
            <person name="Ren S."/>
            <person name="Chen Z."/>
            <person name="Han Z."/>
        </authorList>
    </citation>
    <scope>NUCLEOTIDE SEQUENCE [LARGE SCALE MRNA]</scope>
    <source>
        <tissue>Liver cancer</tissue>
    </source>
</reference>
<reference key="2">
    <citation type="journal article" date="2004" name="Nat. Genet.">
        <title>Complete sequencing and characterization of 21,243 full-length human cDNAs.</title>
        <authorList>
            <person name="Ota T."/>
            <person name="Suzuki Y."/>
            <person name="Nishikawa T."/>
            <person name="Otsuki T."/>
            <person name="Sugiyama T."/>
            <person name="Irie R."/>
            <person name="Wakamatsu A."/>
            <person name="Hayashi K."/>
            <person name="Sato H."/>
            <person name="Nagai K."/>
            <person name="Kimura K."/>
            <person name="Makita H."/>
            <person name="Sekine M."/>
            <person name="Obayashi M."/>
            <person name="Nishi T."/>
            <person name="Shibahara T."/>
            <person name="Tanaka T."/>
            <person name="Ishii S."/>
            <person name="Yamamoto J."/>
            <person name="Saito K."/>
            <person name="Kawai Y."/>
            <person name="Isono Y."/>
            <person name="Nakamura Y."/>
            <person name="Nagahari K."/>
            <person name="Murakami K."/>
            <person name="Yasuda T."/>
            <person name="Iwayanagi T."/>
            <person name="Wagatsuma M."/>
            <person name="Shiratori A."/>
            <person name="Sudo H."/>
            <person name="Hosoiri T."/>
            <person name="Kaku Y."/>
            <person name="Kodaira H."/>
            <person name="Kondo H."/>
            <person name="Sugawara M."/>
            <person name="Takahashi M."/>
            <person name="Kanda K."/>
            <person name="Yokoi T."/>
            <person name="Furuya T."/>
            <person name="Kikkawa E."/>
            <person name="Omura Y."/>
            <person name="Abe K."/>
            <person name="Kamihara K."/>
            <person name="Katsuta N."/>
            <person name="Sato K."/>
            <person name="Tanikawa M."/>
            <person name="Yamazaki M."/>
            <person name="Ninomiya K."/>
            <person name="Ishibashi T."/>
            <person name="Yamashita H."/>
            <person name="Murakawa K."/>
            <person name="Fujimori K."/>
            <person name="Tanai H."/>
            <person name="Kimata M."/>
            <person name="Watanabe M."/>
            <person name="Hiraoka S."/>
            <person name="Chiba Y."/>
            <person name="Ishida S."/>
            <person name="Ono Y."/>
            <person name="Takiguchi S."/>
            <person name="Watanabe S."/>
            <person name="Yosida M."/>
            <person name="Hotuta T."/>
            <person name="Kusano J."/>
            <person name="Kanehori K."/>
            <person name="Takahashi-Fujii A."/>
            <person name="Hara H."/>
            <person name="Tanase T.-O."/>
            <person name="Nomura Y."/>
            <person name="Togiya S."/>
            <person name="Komai F."/>
            <person name="Hara R."/>
            <person name="Takeuchi K."/>
            <person name="Arita M."/>
            <person name="Imose N."/>
            <person name="Musashino K."/>
            <person name="Yuuki H."/>
            <person name="Oshima A."/>
            <person name="Sasaki N."/>
            <person name="Aotsuka S."/>
            <person name="Yoshikawa Y."/>
            <person name="Matsunawa H."/>
            <person name="Ichihara T."/>
            <person name="Shiohata N."/>
            <person name="Sano S."/>
            <person name="Moriya S."/>
            <person name="Momiyama H."/>
            <person name="Satoh N."/>
            <person name="Takami S."/>
            <person name="Terashima Y."/>
            <person name="Suzuki O."/>
            <person name="Nakagawa S."/>
            <person name="Senoh A."/>
            <person name="Mizoguchi H."/>
            <person name="Goto Y."/>
            <person name="Shimizu F."/>
            <person name="Wakebe H."/>
            <person name="Hishigaki H."/>
            <person name="Watanabe T."/>
            <person name="Sugiyama A."/>
            <person name="Takemoto M."/>
            <person name="Kawakami B."/>
            <person name="Yamazaki M."/>
            <person name="Watanabe K."/>
            <person name="Kumagai A."/>
            <person name="Itakura S."/>
            <person name="Fukuzumi Y."/>
            <person name="Fujimori Y."/>
            <person name="Komiyama M."/>
            <person name="Tashiro H."/>
            <person name="Tanigami A."/>
            <person name="Fujiwara T."/>
            <person name="Ono T."/>
            <person name="Yamada K."/>
            <person name="Fujii Y."/>
            <person name="Ozaki K."/>
            <person name="Hirao M."/>
            <person name="Ohmori Y."/>
            <person name="Kawabata A."/>
            <person name="Hikiji T."/>
            <person name="Kobatake N."/>
            <person name="Inagaki H."/>
            <person name="Ikema Y."/>
            <person name="Okamoto S."/>
            <person name="Okitani R."/>
            <person name="Kawakami T."/>
            <person name="Noguchi S."/>
            <person name="Itoh T."/>
            <person name="Shigeta K."/>
            <person name="Senba T."/>
            <person name="Matsumura K."/>
            <person name="Nakajima Y."/>
            <person name="Mizuno T."/>
            <person name="Morinaga M."/>
            <person name="Sasaki M."/>
            <person name="Togashi T."/>
            <person name="Oyama M."/>
            <person name="Hata H."/>
            <person name="Watanabe M."/>
            <person name="Komatsu T."/>
            <person name="Mizushima-Sugano J."/>
            <person name="Satoh T."/>
            <person name="Shirai Y."/>
            <person name="Takahashi Y."/>
            <person name="Nakagawa K."/>
            <person name="Okumura K."/>
            <person name="Nagase T."/>
            <person name="Nomura N."/>
            <person name="Kikuchi H."/>
            <person name="Masuho Y."/>
            <person name="Yamashita R."/>
            <person name="Nakai K."/>
            <person name="Yada T."/>
            <person name="Nakamura Y."/>
            <person name="Ohara O."/>
            <person name="Isogai T."/>
            <person name="Sugano S."/>
        </authorList>
    </citation>
    <scope>NUCLEOTIDE SEQUENCE [LARGE SCALE MRNA]</scope>
    <source>
        <tissue>Cerebellum</tissue>
    </source>
</reference>
<reference key="3">
    <citation type="submission" date="2005-07" db="EMBL/GenBank/DDBJ databases">
        <authorList>
            <person name="Mural R.J."/>
            <person name="Istrail S."/>
            <person name="Sutton G.G."/>
            <person name="Florea L."/>
            <person name="Halpern A.L."/>
            <person name="Mobarry C.M."/>
            <person name="Lippert R."/>
            <person name="Walenz B."/>
            <person name="Shatkay H."/>
            <person name="Dew I."/>
            <person name="Miller J.R."/>
            <person name="Flanigan M.J."/>
            <person name="Edwards N.J."/>
            <person name="Bolanos R."/>
            <person name="Fasulo D."/>
            <person name="Halldorsson B.V."/>
            <person name="Hannenhalli S."/>
            <person name="Turner R."/>
            <person name="Yooseph S."/>
            <person name="Lu F."/>
            <person name="Nusskern D.R."/>
            <person name="Shue B.C."/>
            <person name="Zheng X.H."/>
            <person name="Zhong F."/>
            <person name="Delcher A.L."/>
            <person name="Huson D.H."/>
            <person name="Kravitz S.A."/>
            <person name="Mouchard L."/>
            <person name="Reinert K."/>
            <person name="Remington K.A."/>
            <person name="Clark A.G."/>
            <person name="Waterman M.S."/>
            <person name="Eichler E.E."/>
            <person name="Adams M.D."/>
            <person name="Hunkapiller M.W."/>
            <person name="Myers E.W."/>
            <person name="Venter J.C."/>
        </authorList>
    </citation>
    <scope>NUCLEOTIDE SEQUENCE [LARGE SCALE GENOMIC DNA]</scope>
</reference>
<reference key="4">
    <citation type="journal article" date="2004" name="Genome Res.">
        <title>The status, quality, and expansion of the NIH full-length cDNA project: the Mammalian Gene Collection (MGC).</title>
        <authorList>
            <consortium name="The MGC Project Team"/>
        </authorList>
    </citation>
    <scope>NUCLEOTIDE SEQUENCE [LARGE SCALE MRNA]</scope>
    <source>
        <tissue>Pancreas</tissue>
    </source>
</reference>
<reference key="5">
    <citation type="journal article" date="2011" name="BMC Syst. Biol.">
        <title>Initial characterization of the human central proteome.</title>
        <authorList>
            <person name="Burkard T.R."/>
            <person name="Planyavsky M."/>
            <person name="Kaupe I."/>
            <person name="Breitwieser F.P."/>
            <person name="Buerckstuemmer T."/>
            <person name="Bennett K.L."/>
            <person name="Superti-Furga G."/>
            <person name="Colinge J."/>
        </authorList>
    </citation>
    <scope>IDENTIFICATION BY MASS SPECTROMETRY [LARGE SCALE ANALYSIS]</scope>
</reference>
<reference evidence="6" key="6">
    <citation type="journal article" date="2021" name="Mol. Cell">
        <title>Structure of the human signal peptidase complex reveals the determinants for signal peptide cleavage.</title>
        <authorList>
            <person name="Liaci A.M."/>
            <person name="Steigenberger B."/>
            <person name="Telles de Souza P.C."/>
            <person name="Tamara S."/>
            <person name="Groellers-Mulderij M."/>
            <person name="Ogrissek P."/>
            <person name="Marrink S.J."/>
            <person name="Scheltema R.A."/>
            <person name="Foerster F."/>
        </authorList>
    </citation>
    <scope>STRUCTURE BY ELECTRON MICROSCOPY (4.9 ANGSTROMS)</scope>
    <scope>FUNCTION</scope>
    <scope>CATALYTIC ACTIVITY</scope>
    <scope>IDENTIFICATION IN THE SIGNAL PEPTIDASE COMPLEX</scope>
    <scope>DOMAIN</scope>
    <scope>PROTEOLYTIC CLEAVAGE</scope>
    <scope>ACTIVE SITE</scope>
    <scope>MUTAGENESIS OF SER-68; ARG-109; ASP-128; ASP-133 AND ASP-134</scope>
</reference>
<proteinExistence type="evidence at protein level"/>
<protein>
    <recommendedName>
        <fullName>Signal peptidase complex catalytic subunit SEC11C</fullName>
        <ecNumber evidence="3">3.4.21.89</ecNumber>
    </recommendedName>
    <alternativeName>
        <fullName>Microsomal signal peptidase 21 kDa subunit</fullName>
        <shortName>SPase 21 kDa subunit</shortName>
    </alternativeName>
    <alternativeName>
        <fullName>SEC11 homolog C</fullName>
    </alternativeName>
    <alternativeName>
        <fullName>SEC11-like protein 3</fullName>
    </alternativeName>
    <alternativeName>
        <fullName>SPC21</fullName>
    </alternativeName>
</protein>
<feature type="chain" id="PRO_0000109548" description="Signal peptidase complex catalytic subunit SEC11C">
    <location>
        <begin position="1"/>
        <end position="192"/>
    </location>
</feature>
<feature type="topological domain" description="Cytoplasmic" evidence="1">
    <location>
        <begin position="1"/>
        <end position="28"/>
    </location>
</feature>
<feature type="transmembrane region" description="Helical; Signal-anchor for type II membrane protein" evidence="2">
    <location>
        <begin position="29"/>
        <end position="48"/>
    </location>
</feature>
<feature type="topological domain" description="Lumenal" evidence="1">
    <location>
        <begin position="49"/>
        <end position="192"/>
    </location>
</feature>
<feature type="region of interest" description="C-terminal short (CTS) helix" evidence="3">
    <location>
        <begin position="177"/>
        <end position="188"/>
    </location>
</feature>
<feature type="active site" description="Charge relay system" evidence="5">
    <location>
        <position position="68"/>
    </location>
</feature>
<feature type="active site" description="Charge relay system" evidence="5">
    <location>
        <position position="108"/>
    </location>
</feature>
<feature type="active site" description="Charge relay system" evidence="5">
    <location>
        <position position="134"/>
    </location>
</feature>
<feature type="mutagenesis site" description="Loss of catalytic activity." evidence="3">
    <original>S</original>
    <variation>A</variation>
    <location>
        <position position="68"/>
    </location>
</feature>
<feature type="mutagenesis site" description="Slight reduction in catalytic activity; when associated with R-128." evidence="3">
    <original>R</original>
    <variation>D</variation>
    <location>
        <position position="109"/>
    </location>
</feature>
<feature type="mutagenesis site" description="Moderate reduction in catalytic activity. Reduces protein stability." evidence="3">
    <original>D</original>
    <variation>N</variation>
    <location>
        <position position="128"/>
    </location>
</feature>
<feature type="mutagenesis site" description="Slight reduction in catalytic activity; when associated with D-109." evidence="3">
    <original>D</original>
    <variation>R</variation>
    <location>
        <position position="128"/>
    </location>
</feature>
<feature type="mutagenesis site" description="No effect on catalytic activity or protein stability." evidence="3">
    <original>D</original>
    <variation>N</variation>
    <location>
        <position position="133"/>
    </location>
</feature>
<feature type="mutagenesis site" description="Loss of catalytic activity. Slight reduction in protein stability." evidence="3">
    <original>D</original>
    <variation>N</variation>
    <location>
        <position position="134"/>
    </location>
</feature>
<name>SC11C_HUMAN</name>
<organism>
    <name type="scientific">Homo sapiens</name>
    <name type="common">Human</name>
    <dbReference type="NCBI Taxonomy" id="9606"/>
    <lineage>
        <taxon>Eukaryota</taxon>
        <taxon>Metazoa</taxon>
        <taxon>Chordata</taxon>
        <taxon>Craniata</taxon>
        <taxon>Vertebrata</taxon>
        <taxon>Euteleostomi</taxon>
        <taxon>Mammalia</taxon>
        <taxon>Eutheria</taxon>
        <taxon>Euarchontoglires</taxon>
        <taxon>Primates</taxon>
        <taxon>Haplorrhini</taxon>
        <taxon>Catarrhini</taxon>
        <taxon>Hominidae</taxon>
        <taxon>Homo</taxon>
    </lineage>
</organism>
<accession>Q9BY50</accession>
<accession>B2RAA3</accession>
<dbReference type="EC" id="3.4.21.89" evidence="3"/>
<dbReference type="EMBL" id="AF212233">
    <property type="protein sequence ID" value="AAK14919.1"/>
    <property type="molecule type" value="mRNA"/>
</dbReference>
<dbReference type="EMBL" id="AK314107">
    <property type="protein sequence ID" value="BAG36800.1"/>
    <property type="molecule type" value="mRNA"/>
</dbReference>
<dbReference type="EMBL" id="CH471096">
    <property type="protein sequence ID" value="EAW63090.1"/>
    <property type="molecule type" value="Genomic_DNA"/>
</dbReference>
<dbReference type="EMBL" id="BC009703">
    <property type="protein sequence ID" value="AAH09703.1"/>
    <property type="molecule type" value="mRNA"/>
</dbReference>
<dbReference type="CCDS" id="CCDS11970.1"/>
<dbReference type="RefSeq" id="NP_150596.1">
    <property type="nucleotide sequence ID" value="NM_033280.4"/>
</dbReference>
<dbReference type="PDB" id="7P2Q">
    <property type="method" value="EM"/>
    <property type="resolution" value="4.90 A"/>
    <property type="chains" value="A=1-192"/>
</dbReference>
<dbReference type="PDBsum" id="7P2Q"/>
<dbReference type="EMDB" id="EMD-13172"/>
<dbReference type="SMR" id="Q9BY50"/>
<dbReference type="BioGRID" id="124756">
    <property type="interactions" value="60"/>
</dbReference>
<dbReference type="ComplexPortal" id="CPX-7205">
    <property type="entry name" value="Signal peptidase complex, SEC11C variant"/>
</dbReference>
<dbReference type="FunCoup" id="Q9BY50">
    <property type="interactions" value="601"/>
</dbReference>
<dbReference type="IntAct" id="Q9BY50">
    <property type="interactions" value="54"/>
</dbReference>
<dbReference type="STRING" id="9606.ENSP00000468633"/>
<dbReference type="MEROPS" id="S26.010"/>
<dbReference type="iPTMnet" id="Q9BY50"/>
<dbReference type="PhosphoSitePlus" id="Q9BY50"/>
<dbReference type="SwissPalm" id="Q9BY50"/>
<dbReference type="BioMuta" id="SEC11C"/>
<dbReference type="DMDM" id="17368701"/>
<dbReference type="jPOST" id="Q9BY50"/>
<dbReference type="MassIVE" id="Q9BY50"/>
<dbReference type="PaxDb" id="9606-ENSP00000468633"/>
<dbReference type="PeptideAtlas" id="Q9BY50"/>
<dbReference type="ProteomicsDB" id="79586"/>
<dbReference type="Pumba" id="Q9BY50"/>
<dbReference type="Antibodypedia" id="22969">
    <property type="antibodies" value="48 antibodies from 14 providers"/>
</dbReference>
<dbReference type="DNASU" id="90701"/>
<dbReference type="Ensembl" id="ENST00000587834.6">
    <property type="protein sequence ID" value="ENSP00000468633.1"/>
    <property type="gene ID" value="ENSG00000166562.10"/>
</dbReference>
<dbReference type="Ensembl" id="ENST00000715778.1">
    <property type="protein sequence ID" value="ENSP00000520518.1"/>
    <property type="gene ID" value="ENSG00000166562.10"/>
</dbReference>
<dbReference type="GeneID" id="90701"/>
<dbReference type="KEGG" id="hsa:90701"/>
<dbReference type="MANE-Select" id="ENST00000587834.6">
    <property type="protein sequence ID" value="ENSP00000468633.1"/>
    <property type="RefSeq nucleotide sequence ID" value="NM_033280.4"/>
    <property type="RefSeq protein sequence ID" value="NP_150596.1"/>
</dbReference>
<dbReference type="UCSC" id="uc002lht.4">
    <property type="organism name" value="human"/>
</dbReference>
<dbReference type="AGR" id="HGNC:23400"/>
<dbReference type="CTD" id="90701"/>
<dbReference type="GeneCards" id="SEC11C"/>
<dbReference type="HGNC" id="HGNC:23400">
    <property type="gene designation" value="SEC11C"/>
</dbReference>
<dbReference type="HPA" id="ENSG00000166562">
    <property type="expression patterns" value="Low tissue specificity"/>
</dbReference>
<dbReference type="neXtProt" id="NX_Q9BY50"/>
<dbReference type="OpenTargets" id="ENSG00000166562"/>
<dbReference type="PharmGKB" id="PA162402587"/>
<dbReference type="VEuPathDB" id="HostDB:ENSG00000166562"/>
<dbReference type="eggNOG" id="KOG3342">
    <property type="taxonomic scope" value="Eukaryota"/>
</dbReference>
<dbReference type="GeneTree" id="ENSGT00390000015600"/>
<dbReference type="InParanoid" id="Q9BY50"/>
<dbReference type="OMA" id="GSMEPFM"/>
<dbReference type="OrthoDB" id="10257561at2759"/>
<dbReference type="PAN-GO" id="Q9BY50">
    <property type="GO annotations" value="3 GO annotations based on evolutionary models"/>
</dbReference>
<dbReference type="PhylomeDB" id="Q9BY50"/>
<dbReference type="PathwayCommons" id="Q9BY50"/>
<dbReference type="Reactome" id="R-HSA-1799339">
    <property type="pathway name" value="SRP-dependent cotranslational protein targeting to membrane"/>
</dbReference>
<dbReference type="Reactome" id="R-HSA-381771">
    <property type="pathway name" value="Synthesis, secretion, and inactivation of Glucagon-like Peptide-1 (GLP-1)"/>
</dbReference>
<dbReference type="Reactome" id="R-HSA-400511">
    <property type="pathway name" value="Synthesis, secretion, and inactivation of Glucose-dependent Insulinotropic Polypeptide (GIP)"/>
</dbReference>
<dbReference type="Reactome" id="R-HSA-422085">
    <property type="pathway name" value="Synthesis, secretion, and deacylation of Ghrelin"/>
</dbReference>
<dbReference type="Reactome" id="R-HSA-9828806">
    <property type="pathway name" value="Maturation of hRSV A proteins"/>
</dbReference>
<dbReference type="SignaLink" id="Q9BY50"/>
<dbReference type="BioGRID-ORCS" id="90701">
    <property type="hits" value="12 hits in 1152 CRISPR screens"/>
</dbReference>
<dbReference type="ChiTaRS" id="SEC11C">
    <property type="organism name" value="human"/>
</dbReference>
<dbReference type="GenomeRNAi" id="90701"/>
<dbReference type="Pharos" id="Q9BY50">
    <property type="development level" value="Tdark"/>
</dbReference>
<dbReference type="PRO" id="PR:Q9BY50"/>
<dbReference type="Proteomes" id="UP000005640">
    <property type="component" value="Chromosome 18"/>
</dbReference>
<dbReference type="RNAct" id="Q9BY50">
    <property type="molecule type" value="protein"/>
</dbReference>
<dbReference type="Bgee" id="ENSG00000166562">
    <property type="expression patterns" value="Expressed in islet of Langerhans and 184 other cell types or tissues"/>
</dbReference>
<dbReference type="ExpressionAtlas" id="Q9BY50">
    <property type="expression patterns" value="baseline and differential"/>
</dbReference>
<dbReference type="GO" id="GO:0005789">
    <property type="term" value="C:endoplasmic reticulum membrane"/>
    <property type="evidence" value="ECO:0000314"/>
    <property type="project" value="ComplexPortal"/>
</dbReference>
<dbReference type="GO" id="GO:0005787">
    <property type="term" value="C:signal peptidase complex"/>
    <property type="evidence" value="ECO:0000314"/>
    <property type="project" value="UniProtKB"/>
</dbReference>
<dbReference type="GO" id="GO:0008233">
    <property type="term" value="F:peptidase activity"/>
    <property type="evidence" value="ECO:0000318"/>
    <property type="project" value="GO_Central"/>
</dbReference>
<dbReference type="GO" id="GO:0004252">
    <property type="term" value="F:serine-type endopeptidase activity"/>
    <property type="evidence" value="ECO:0000314"/>
    <property type="project" value="UniProtKB"/>
</dbReference>
<dbReference type="GO" id="GO:0006465">
    <property type="term" value="P:signal peptide processing"/>
    <property type="evidence" value="ECO:0000314"/>
    <property type="project" value="UniProtKB"/>
</dbReference>
<dbReference type="CDD" id="cd06530">
    <property type="entry name" value="S26_SPase_I"/>
    <property type="match status" value="1"/>
</dbReference>
<dbReference type="FunFam" id="2.10.109.10:FF:000003">
    <property type="entry name" value="Signal peptidase complex catalytic subunit SEC11"/>
    <property type="match status" value="1"/>
</dbReference>
<dbReference type="Gene3D" id="2.10.109.10">
    <property type="entry name" value="Umud Fragment, subunit A"/>
    <property type="match status" value="1"/>
</dbReference>
<dbReference type="InterPro" id="IPR036286">
    <property type="entry name" value="LexA/Signal_pep-like_sf"/>
</dbReference>
<dbReference type="InterPro" id="IPR019758">
    <property type="entry name" value="Pept_S26A_signal_pept_1_CS"/>
</dbReference>
<dbReference type="InterPro" id="IPR019756">
    <property type="entry name" value="Pept_S26A_signal_pept_1_Ser-AS"/>
</dbReference>
<dbReference type="InterPro" id="IPR015927">
    <property type="entry name" value="Peptidase_S24_S26A/B/C"/>
</dbReference>
<dbReference type="InterPro" id="IPR019533">
    <property type="entry name" value="Peptidase_S26"/>
</dbReference>
<dbReference type="InterPro" id="IPR001733">
    <property type="entry name" value="Peptidase_S26B"/>
</dbReference>
<dbReference type="NCBIfam" id="TIGR02228">
    <property type="entry name" value="sigpep_I_arch"/>
    <property type="match status" value="1"/>
</dbReference>
<dbReference type="PANTHER" id="PTHR10806">
    <property type="entry name" value="SIGNAL PEPTIDASE COMPLEX CATALYTIC SUBUNIT SEC11"/>
    <property type="match status" value="1"/>
</dbReference>
<dbReference type="PANTHER" id="PTHR10806:SF12">
    <property type="entry name" value="SIGNAL PEPTIDASE COMPLEX CATALYTIC SUBUNIT SEC11C"/>
    <property type="match status" value="1"/>
</dbReference>
<dbReference type="Pfam" id="PF00717">
    <property type="entry name" value="Peptidase_S24"/>
    <property type="match status" value="1"/>
</dbReference>
<dbReference type="PRINTS" id="PR00728">
    <property type="entry name" value="SIGNALPTASE"/>
</dbReference>
<dbReference type="SUPFAM" id="SSF51306">
    <property type="entry name" value="LexA/Signal peptidase"/>
    <property type="match status" value="1"/>
</dbReference>
<dbReference type="PROSITE" id="PS00501">
    <property type="entry name" value="SPASE_I_1"/>
    <property type="match status" value="1"/>
</dbReference>
<dbReference type="PROSITE" id="PS00761">
    <property type="entry name" value="SPASE_I_3"/>
    <property type="match status" value="1"/>
</dbReference>
<gene>
    <name type="primary">SEC11C</name>
    <name type="synonym">SEC11L3</name>
    <name type="synonym">SPC21</name>
    <name type="synonym">SPCS4C</name>
</gene>
<comment type="function">
    <text evidence="3">Catalytic component of the signal peptidase complex (SPC) which catalyzes the cleavage of N-terminal signal sequences from nascent proteins as they are translocated into the lumen of the endoplasmic reticulum (PubMed:34388369). Specifically cleaves N-terminal signal peptides that contain a hydrophobic alpha-helix (h-region) shorter than 18-20 amino acids (PubMed:34388369).</text>
</comment>
<comment type="catalytic activity">
    <reaction evidence="3">
        <text>Cleavage of hydrophobic, N-terminal signal or leader sequences from secreted and periplasmic proteins.</text>
        <dbReference type="EC" id="3.4.21.89"/>
    </reaction>
</comment>
<comment type="subunit">
    <text evidence="3">Component of the signal peptidase complex paralog C (SPC-C) composed of a catalytic subunit SEC11C and three accessory subunits SPCS1, SPCS2 and SPCS3 (PubMed:34388369). Within the complex, interacts with SPCS2 and SPCS3 (PubMed:34388369). The complex induces a local thinning of the ER membrane which is used to measure the length of the signal peptide (SP) h-region of protein substrates (PubMed:34388369). This ensures the selectivity of the complex towards h-regions shorter than 18-20 amino acids (PubMed:34388369).</text>
</comment>
<comment type="interaction">
    <interactant intactId="EBI-2855401">
        <id>Q9BY50</id>
    </interactant>
    <interactant intactId="EBI-8648738">
        <id>Q8WVV5</id>
        <label>BTN2A2</label>
    </interactant>
    <organismsDiffer>false</organismsDiffer>
    <experiments>3</experiments>
</comment>
<comment type="interaction">
    <interactant intactId="EBI-2855401">
        <id>Q9BY50</id>
    </interactant>
    <interactant intactId="EBI-2835920">
        <id>P06681</id>
        <label>C2</label>
    </interactant>
    <organismsDiffer>false</organismsDiffer>
    <experiments>5</experiments>
</comment>
<comment type="interaction">
    <interactant intactId="EBI-2855401">
        <id>Q9BY50</id>
    </interactant>
    <interactant intactId="EBI-18961338">
        <id>Q8N126</id>
        <label>CADM3</label>
    </interactant>
    <organismsDiffer>false</organismsDiffer>
    <experiments>3</experiments>
</comment>
<comment type="interaction">
    <interactant intactId="EBI-2855401">
        <id>Q9BY50</id>
    </interactant>
    <interactant intactId="EBI-2806151">
        <id>P09601</id>
        <label>HMOX1</label>
    </interactant>
    <organismsDiffer>false</organismsDiffer>
    <experiments>3</experiments>
</comment>
<comment type="interaction">
    <interactant intactId="EBI-2855401">
        <id>Q9BY50</id>
    </interactant>
    <interactant intactId="EBI-11956541">
        <id>Q9GZY8-5</id>
        <label>MFF</label>
    </interactant>
    <organismsDiffer>false</organismsDiffer>
    <experiments>3</experiments>
</comment>
<comment type="interaction">
    <interactant intactId="EBI-2855401">
        <id>Q9BY50</id>
    </interactant>
    <interactant intactId="EBI-11721828">
        <id>Q8IY26</id>
        <label>PLPP6</label>
    </interactant>
    <organismsDiffer>false</organismsDiffer>
    <experiments>3</experiments>
</comment>
<comment type="interaction">
    <interactant intactId="EBI-2855401">
        <id>Q9BY50</id>
    </interactant>
    <interactant intactId="EBI-712503">
        <id>O95084</id>
        <label>PRSS23</label>
    </interactant>
    <organismsDiffer>false</organismsDiffer>
    <experiments>3</experiments>
</comment>
<comment type="interaction">
    <interactant intactId="EBI-2855401">
        <id>Q9BY50</id>
    </interactant>
    <interactant intactId="EBI-10244780">
        <id>Q5QGT7</id>
        <label>RTP2</label>
    </interactant>
    <organismsDiffer>false</organismsDiffer>
    <experiments>3</experiments>
</comment>
<comment type="interaction">
    <interactant intactId="EBI-2855401">
        <id>Q9BY50</id>
    </interactant>
    <interactant intactId="EBI-2684237">
        <id>O00767</id>
        <label>SCD</label>
    </interactant>
    <organismsDiffer>false</organismsDiffer>
    <experiments>3</experiments>
</comment>
<comment type="interaction">
    <interactant intactId="EBI-2855401">
        <id>Q9BY50</id>
    </interactant>
    <interactant intactId="EBI-10277687">
        <id>Q8WWX9</id>
        <label>SELENOM</label>
    </interactant>
    <organismsDiffer>false</organismsDiffer>
    <experiments>3</experiments>
</comment>
<comment type="interaction">
    <interactant intactId="EBI-2855401">
        <id>Q9BY50</id>
    </interactant>
    <interactant intactId="EBI-10329948">
        <id>Q9Y6X1</id>
        <label>SERP1</label>
    </interactant>
    <organismsDiffer>false</organismsDiffer>
    <experiments>3</experiments>
</comment>
<comment type="interaction">
    <interactant intactId="EBI-2855401">
        <id>Q9BY50</id>
    </interactant>
    <interactant intactId="EBI-6166040">
        <id>P61009</id>
        <label>SPCS3</label>
    </interactant>
    <organismsDiffer>false</organismsDiffer>
    <experiments>7</experiments>
</comment>
<comment type="interaction">
    <interactant intactId="EBI-2855401">
        <id>Q9BY50</id>
    </interactant>
    <interactant intactId="EBI-2691717">
        <id>Q86Y82</id>
        <label>STX12</label>
    </interactant>
    <organismsDiffer>false</organismsDiffer>
    <experiments>3</experiments>
</comment>
<comment type="interaction">
    <interactant intactId="EBI-2855401">
        <id>Q9BY50</id>
    </interactant>
    <interactant intactId="EBI-10694905">
        <id>Q5BJH2-2</id>
        <label>TMEM128</label>
    </interactant>
    <organismsDiffer>false</organismsDiffer>
    <experiments>3</experiments>
</comment>
<comment type="interaction">
    <interactant intactId="EBI-2855401">
        <id>Q9BY50</id>
    </interactant>
    <interactant intactId="EBI-12887458">
        <id>Q9BU79</id>
        <label>TMEM243</label>
    </interactant>
    <organismsDiffer>false</organismsDiffer>
    <experiments>3</experiments>
</comment>
<comment type="interaction">
    <interactant intactId="EBI-2855401">
        <id>Q9BY50</id>
    </interactant>
    <interactant intactId="EBI-11956809">
        <id>Q8TBM7</id>
        <label>TMEM254</label>
    </interactant>
    <organismsDiffer>false</organismsDiffer>
    <experiments>3</experiments>
</comment>
<comment type="interaction">
    <interactant intactId="EBI-2855401">
        <id>Q9BY50</id>
    </interactant>
    <interactant intactId="EBI-12038591">
        <id>Q69YG0</id>
        <label>TMEM42</label>
    </interactant>
    <organismsDiffer>false</organismsDiffer>
    <experiments>3</experiments>
</comment>
<comment type="interaction">
    <interactant intactId="EBI-2855401">
        <id>Q9BY50</id>
    </interactant>
    <interactant intactId="EBI-16746122">
        <id>Q9NSU2-1</id>
        <label>TREX1</label>
    </interactant>
    <organismsDiffer>false</organismsDiffer>
    <experiments>3</experiments>
</comment>
<comment type="interaction">
    <interactant intactId="EBI-2855401">
        <id>Q9BY50</id>
    </interactant>
    <interactant intactId="EBI-12003468">
        <id>A0AVG3</id>
        <label>TSNARE1</label>
    </interactant>
    <organismsDiffer>false</organismsDiffer>
    <experiments>3</experiments>
</comment>
<comment type="interaction">
    <interactant intactId="EBI-2855401">
        <id>Q9BY50</id>
    </interactant>
    <interactant intactId="EBI-988826">
        <id>Q9Y385</id>
        <label>UBE2J1</label>
    </interactant>
    <organismsDiffer>false</organismsDiffer>
    <experiments>3</experiments>
</comment>
<comment type="interaction">
    <interactant intactId="EBI-2855401">
        <id>Q9BY50</id>
    </interactant>
    <interactant intactId="EBI-12097582">
        <id>P23763-3</id>
        <label>VAMP1</label>
    </interactant>
    <organismsDiffer>false</organismsDiffer>
    <experiments>3</experiments>
</comment>
<comment type="interaction">
    <interactant intactId="EBI-2855401">
        <id>Q9BY50</id>
    </interactant>
    <interactant intactId="EBI-744953">
        <id>O75379</id>
        <label>VAMP4</label>
    </interactant>
    <organismsDiffer>false</organismsDiffer>
    <experiments>3</experiments>
</comment>
<comment type="interaction">
    <interactant intactId="EBI-2855401">
        <id>Q9BY50</id>
    </interactant>
    <interactant intactId="EBI-10191195">
        <id>O95183</id>
        <label>VAMP5</label>
    </interactant>
    <organismsDiffer>false</organismsDiffer>
    <experiments>3</experiments>
</comment>
<comment type="interaction">
    <interactant intactId="EBI-2855401">
        <id>Q9BY50</id>
    </interactant>
    <interactant intactId="EBI-1059156">
        <id>Q9P0L0</id>
        <label>VAPA</label>
    </interactant>
    <organismsDiffer>false</organismsDiffer>
    <experiments>3</experiments>
</comment>
<comment type="subcellular location">
    <subcellularLocation>
        <location evidence="1">Endoplasmic reticulum membrane</location>
        <topology evidence="1">Single-pass type II membrane protein</topology>
    </subcellularLocation>
</comment>
<comment type="domain">
    <text evidence="3 5">The C-terminal short (CTS) helix is essential for catalytic activity (PubMed:34388369). It may be accommodated as a transmembrane helix in the thinned membrane environment of the complex, similarly to the signal peptide in the complex substrates (Probable).</text>
</comment>
<comment type="PTM">
    <text evidence="3">May undergo processing at the N-terminus.</text>
</comment>
<comment type="similarity">
    <text evidence="4">Belongs to the peptidase S26B family.</text>
</comment>
<sequence length="192" mass="21542">MVRAGAVGAHLPASGLDIFGDLKKMNKRQLYYQVLNFAMIVSSALMIWKGLIVLTGSESPIVVVLSGSMEPAFHRGDLLFLTNFREDPIRAGEIVVFKVEGRDIPIVHRVIKVHEKDNGDIKFLTKGDNNEVDDRGLYKEGQNWLEKKDVVGRARGFLPYVGMVTIIMNDYPKFKYALLAVMGAYVLLKRES</sequence>
<keyword id="KW-0002">3D-structure</keyword>
<keyword id="KW-0256">Endoplasmic reticulum</keyword>
<keyword id="KW-0378">Hydrolase</keyword>
<keyword id="KW-0472">Membrane</keyword>
<keyword id="KW-0645">Protease</keyword>
<keyword id="KW-1267">Proteomics identification</keyword>
<keyword id="KW-1185">Reference proteome</keyword>
<keyword id="KW-0735">Signal-anchor</keyword>
<keyword id="KW-0812">Transmembrane</keyword>
<keyword id="KW-1133">Transmembrane helix</keyword>
<evidence type="ECO:0000250" key="1">
    <source>
        <dbReference type="UniProtKB" id="P13679"/>
    </source>
</evidence>
<evidence type="ECO:0000255" key="2"/>
<evidence type="ECO:0000269" key="3">
    <source>
    </source>
</evidence>
<evidence type="ECO:0000305" key="4"/>
<evidence type="ECO:0000305" key="5">
    <source>
    </source>
</evidence>
<evidence type="ECO:0007744" key="6">
    <source>
        <dbReference type="PDB" id="7P2Q"/>
    </source>
</evidence>